<comment type="function">
    <text>Directly involved in the toxicity for RTG-2 (rainbow trout gonad) fish cells.</text>
</comment>
<comment type="subcellular location">
    <subcellularLocation>
        <location>Secreted</location>
    </subcellularLocation>
    <text>Translocated into the cytosol of fish cells via a type III secretion system.</text>
</comment>
<comment type="miscellaneous">
    <text>Although the gene exists in strain ATCC 33658, it is not expressed.</text>
</comment>
<gene>
    <name type="primary">aexT</name>
</gene>
<dbReference type="EC" id="2.4.2.-"/>
<dbReference type="EMBL" id="AF288366">
    <property type="protein sequence ID" value="AAK83052.1"/>
    <property type="molecule type" value="Genomic_DNA"/>
</dbReference>
<dbReference type="EMBL" id="AJ578475">
    <property type="protein sequence ID" value="CAE17664.1"/>
    <property type="molecule type" value="Genomic_DNA"/>
</dbReference>
<dbReference type="RefSeq" id="WP_005320615.1">
    <property type="nucleotide sequence ID" value="NZ_UFSF01000001.1"/>
</dbReference>
<dbReference type="SMR" id="Q93Q17"/>
<dbReference type="STRING" id="1233098.GCA_000315855_01091"/>
<dbReference type="OMA" id="MQIQANT"/>
<dbReference type="GO" id="GO:0005576">
    <property type="term" value="C:extracellular region"/>
    <property type="evidence" value="ECO:0007669"/>
    <property type="project" value="UniProtKB-SubCell"/>
</dbReference>
<dbReference type="GO" id="GO:0016757">
    <property type="term" value="F:glycosyltransferase activity"/>
    <property type="evidence" value="ECO:0007669"/>
    <property type="project" value="UniProtKB-KW"/>
</dbReference>
<dbReference type="GO" id="GO:0005096">
    <property type="term" value="F:GTPase activator activity"/>
    <property type="evidence" value="ECO:0007669"/>
    <property type="project" value="InterPro"/>
</dbReference>
<dbReference type="GO" id="GO:0016779">
    <property type="term" value="F:nucleotidyltransferase activity"/>
    <property type="evidence" value="ECO:0007669"/>
    <property type="project" value="UniProtKB-KW"/>
</dbReference>
<dbReference type="GO" id="GO:0090729">
    <property type="term" value="F:toxin activity"/>
    <property type="evidence" value="ECO:0007669"/>
    <property type="project" value="UniProtKB-KW"/>
</dbReference>
<dbReference type="CDD" id="cd00219">
    <property type="entry name" value="ToxGAP"/>
    <property type="match status" value="1"/>
</dbReference>
<dbReference type="Gene3D" id="6.10.250.2690">
    <property type="match status" value="1"/>
</dbReference>
<dbReference type="Gene3D" id="3.90.176.10">
    <property type="entry name" value="Toxin ADP-ribosyltransferase, Chain A, domain 1"/>
    <property type="match status" value="1"/>
</dbReference>
<dbReference type="Gene3D" id="1.20.120.260">
    <property type="entry name" value="Virulence factor YopE uncharacterised domain"/>
    <property type="match status" value="1"/>
</dbReference>
<dbReference type="InterPro" id="IPR003540">
    <property type="entry name" value="ADP-ribosyltransferase"/>
</dbReference>
<dbReference type="InterPro" id="IPR050999">
    <property type="entry name" value="ADP-ribosyltransferase_ARG"/>
</dbReference>
<dbReference type="InterPro" id="IPR003537">
    <property type="entry name" value="YopE-like"/>
</dbReference>
<dbReference type="InterPro" id="IPR014773">
    <property type="entry name" value="YopE_GAP_dom"/>
</dbReference>
<dbReference type="InterPro" id="IPR037168">
    <property type="entry name" value="YopE_GAP_dom_sf"/>
</dbReference>
<dbReference type="PANTHER" id="PTHR10339">
    <property type="entry name" value="ADP-RIBOSYLTRANSFERASE"/>
    <property type="match status" value="1"/>
</dbReference>
<dbReference type="PANTHER" id="PTHR10339:SF25">
    <property type="entry name" value="SECRETED EXOENZYME S"/>
    <property type="match status" value="1"/>
</dbReference>
<dbReference type="Pfam" id="PF03496">
    <property type="entry name" value="ADPrib_exo_Tox"/>
    <property type="match status" value="1"/>
</dbReference>
<dbReference type="Pfam" id="PF03545">
    <property type="entry name" value="YopE"/>
    <property type="match status" value="1"/>
</dbReference>
<dbReference type="PRINTS" id="PR01372">
    <property type="entry name" value="YERSINIAYOPE"/>
</dbReference>
<dbReference type="SUPFAM" id="SSF56399">
    <property type="entry name" value="ADP-ribosylation"/>
    <property type="match status" value="1"/>
</dbReference>
<dbReference type="SUPFAM" id="SSF47233">
    <property type="entry name" value="Bacterial GAP domain"/>
    <property type="match status" value="1"/>
</dbReference>
<dbReference type="PROSITE" id="PS52059">
    <property type="entry name" value="BACT_RHOGAP"/>
    <property type="match status" value="1"/>
</dbReference>
<dbReference type="PROSITE" id="PS51996">
    <property type="entry name" value="TR_MART"/>
    <property type="match status" value="1"/>
</dbReference>
<name>AEXT_AERSA</name>
<protein>
    <recommendedName>
        <fullName>ADP-ribosyltransferase toxin AexT</fullName>
        <ecNumber>2.4.2.-</ecNumber>
    </recommendedName>
    <alternativeName>
        <fullName>Exoenzyme T</fullName>
    </alternativeName>
</protein>
<reference key="1">
    <citation type="journal article" date="2002" name="J. Bacteriol.">
        <title>Characterization of an ADP-ribosyltransferase toxin (AexT) from Aeromonas salmonicida subsp. salmonicida.</title>
        <authorList>
            <person name="Braun M."/>
            <person name="Stuber K."/>
            <person name="Schlatter Y."/>
            <person name="Wahli T."/>
            <person name="Kuhnert P."/>
            <person name="Frey J."/>
        </authorList>
    </citation>
    <scope>NUCLEOTIDE SEQUENCE [GENOMIC DNA]</scope>
    <scope>TOXICITY</scope>
    <source>
        <strain>ATCC 33658 / DSM 19634 / JCM 7874 / NCIMB 1102 / NCTC 12959</strain>
        <strain>JF2267</strain>
    </source>
</reference>
<reference key="2">
    <citation type="journal article" date="2003" name="J. Bacteriol.">
        <title>The ADP-ribosylating toxin, AexT, from Aeromonas salmonicida subsp. salmonicida is translocated via a type III secretion pathway.</title>
        <authorList>
            <person name="Burr S.E."/>
            <person name="Stuber K."/>
            <person name="Frey J."/>
        </authorList>
    </citation>
    <scope>SECRETION VIA TYPE III SECRETION PATHWAY</scope>
</reference>
<sequence length="475" mass="50105">MQIQANTVGTQAVAHHSDATTGVGRMGQMEARQVATGQDAILLGSRSEPQKGQGLLSRLGAQLARPFVAIKEWISNLLGTDKRAAAPKAQTAVSPEDLQRLMKQAAFGSSLGGFAKADVLNNITGEQLGKDHASLATGNGPLRSLCTALQAVVIGSQQPQLRELATGLLARPIAGIPLQQWGSVGGKVTELLTSAPPELLKEAMSQLHTAMGEVADLQRAVKAEVAGEPARSATTAAAVAPLQSGESEVNVEPADKALAEGLQEQFGLEAEQYLGEQPHGTYSDAEVMALGLYTNGEYQHLNRSLRQEKQLDAGQALIDQGMSTAFEKSTPTEQLIKTFRGTHGGDAFNEVAEGQVGHDVAYLSTSRDPKVATNFGGSGSISTIFGRSGIDVSDISVEGDEQEILYNKETDMRVLLSAKDERGVTRRVLEEASLGEQSGHSKGLLDGLDLARGAGGADKPQEQDIRLKMRGLDLA</sequence>
<organism>
    <name type="scientific">Aeromonas salmonicida</name>
    <dbReference type="NCBI Taxonomy" id="645"/>
    <lineage>
        <taxon>Bacteria</taxon>
        <taxon>Pseudomonadati</taxon>
        <taxon>Pseudomonadota</taxon>
        <taxon>Gammaproteobacteria</taxon>
        <taxon>Aeromonadales</taxon>
        <taxon>Aeromonadaceae</taxon>
        <taxon>Aeromonas</taxon>
    </lineage>
</organism>
<proteinExistence type="predicted"/>
<keyword id="KW-0328">Glycosyltransferase</keyword>
<keyword id="KW-0343">GTPase activation</keyword>
<keyword id="KW-0548">Nucleotidyltransferase</keyword>
<keyword id="KW-0964">Secreted</keyword>
<keyword id="KW-0800">Toxin</keyword>
<keyword id="KW-0808">Transferase</keyword>
<keyword id="KW-0843">Virulence</keyword>
<accession>Q93Q17</accession>
<evidence type="ECO:0000255" key="1">
    <source>
        <dbReference type="PROSITE-ProRule" id="PRU01340"/>
    </source>
</evidence>
<evidence type="ECO:0000255" key="2">
    <source>
        <dbReference type="PROSITE-ProRule" id="PRU01404"/>
    </source>
</evidence>
<feature type="chain" id="PRO_0000064470" description="ADP-ribosyltransferase toxin AexT">
    <location>
        <begin position="1"/>
        <end position="475"/>
    </location>
</feature>
<feature type="domain" description="Bacterial Rho-GAP" evidence="2">
    <location>
        <begin position="93"/>
        <end position="226"/>
    </location>
</feature>
<feature type="domain" description="TR mART core" evidence="1">
    <location>
        <begin position="260"/>
        <end position="436"/>
    </location>
</feature>
<feature type="active site" evidence="1">
    <location>
        <position position="340"/>
    </location>
</feature>
<feature type="active site" evidence="1">
    <location>
        <position position="364"/>
    </location>
</feature>
<feature type="active site" evidence="1">
    <location>
        <position position="403"/>
    </location>
</feature>
<feature type="site" description="Arginine finger; crucial for GTP hydrolysis by stabilizing the transition state" evidence="2">
    <location>
        <position position="143"/>
    </location>
</feature>